<sequence>MLLVHIISFLLFFQLSAAKAPPSKTSLINTHERRSIYSCYVGLRKETWGFNGSAICRYEPAIQSMLYCLYEDTHEKGYSNKTLEKGFEEMRQFCYTPKFLNMTDAEFYTSLDNGTYYIQDQPKAGINITYPIRLNTTLRKAYYDAYYGYYYNHDIPYYFGGIICAYFVGVMLLAGLIRFLNYTPIKKIMFQQKLVNYVRGYTTLPTLYEKHAEPFSYLKVITGYLPTRFETLVILGYLILHTIFMAYKYQYDPYHIIFAAHRAEVAHFVAYRSGILSFAHLPLIVLFAGRNNFLQLISGLKHTSFIVFHKWLGRMMFLDAIIHAAGFTNYYLYYKKWNTVRLRVYWKFGIATTCLAGMLIFFSIAAFRRHYYETFMALHIVFAALFLYTCWEHVTNFSGIEWIYAAIAIWGVDRIVRITRIALLGFPKADLQLVGSDLVRVTVKKPKKFWKAKPGQYVFVSFLRPLCFWQSHPFTVMDSCVNDRELVIVLKAKKGVTKLVRNFVERKGGKASMRLAIEGPYGSKSTAHRFDNVLLLAGGSGLPGPISHALELGKTTAASGKNFVQLVIAVRGLDMLNACKKELMALKGLNVQVHIYNSKQELASAEKISSNEVKNGETTAEKAPSSLSNSEKAPSESENTELPLSLNDTSISDLEFATFHVGRPNVEEILNESVNHSGSLAVVCCGPPIFVDTARNQTAKAVIRNPSRMIEYLEEYQAW</sequence>
<evidence type="ECO:0000250" key="1"/>
<evidence type="ECO:0000255" key="2"/>
<evidence type="ECO:0000255" key="3">
    <source>
        <dbReference type="PROSITE-ProRule" id="PRU00716"/>
    </source>
</evidence>
<evidence type="ECO:0000256" key="4">
    <source>
        <dbReference type="SAM" id="MobiDB-lite"/>
    </source>
</evidence>
<evidence type="ECO:0000269" key="5">
    <source>
    </source>
</evidence>
<evidence type="ECO:0000269" key="6">
    <source>
    </source>
</evidence>
<evidence type="ECO:0000269" key="7">
    <source>
    </source>
</evidence>
<evidence type="ECO:0000305" key="8"/>
<name>FRE4_YEAST</name>
<feature type="signal peptide" evidence="2">
    <location>
        <begin position="1"/>
        <end position="18"/>
    </location>
</feature>
<feature type="chain" id="PRO_0000010140" description="Ferric reductase transmembrane component 4">
    <location>
        <begin position="19"/>
        <end position="719"/>
    </location>
</feature>
<feature type="topological domain" description="Extracellular" evidence="1">
    <location>
        <begin position="19"/>
        <end position="156"/>
    </location>
</feature>
<feature type="transmembrane region" description="Helical; Name=1" evidence="2">
    <location>
        <begin position="157"/>
        <end position="177"/>
    </location>
</feature>
<feature type="topological domain" description="Cytoplasmic" evidence="1">
    <location>
        <begin position="178"/>
        <end position="228"/>
    </location>
</feature>
<feature type="transmembrane region" description="Helical; Name=2" evidence="2">
    <location>
        <begin position="229"/>
        <end position="249"/>
    </location>
</feature>
<feature type="topological domain" description="Extracellular" evidence="1">
    <location>
        <begin position="250"/>
        <end position="267"/>
    </location>
</feature>
<feature type="transmembrane region" description="Helical; Name=3" evidence="2">
    <location>
        <begin position="268"/>
        <end position="288"/>
    </location>
</feature>
<feature type="topological domain" description="Cytoplasmic" evidence="1">
    <location>
        <begin position="289"/>
        <end position="304"/>
    </location>
</feature>
<feature type="transmembrane region" description="Helical; Name=4" evidence="2">
    <location>
        <begin position="305"/>
        <end position="325"/>
    </location>
</feature>
<feature type="topological domain" description="Extracellular" evidence="1">
    <location>
        <begin position="326"/>
        <end position="346"/>
    </location>
</feature>
<feature type="transmembrane region" description="Helical; Name=5" evidence="2">
    <location>
        <begin position="347"/>
        <end position="367"/>
    </location>
</feature>
<feature type="topological domain" description="Cytoplasmic" evidence="1">
    <location>
        <begin position="368"/>
        <end position="373"/>
    </location>
</feature>
<feature type="transmembrane region" description="Helical; Name=6" evidence="2">
    <location>
        <begin position="374"/>
        <end position="394"/>
    </location>
</feature>
<feature type="topological domain" description="Extracellular" evidence="1">
    <location>
        <position position="395"/>
    </location>
</feature>
<feature type="transmembrane region" description="Helical; Name=7" evidence="2">
    <location>
        <begin position="396"/>
        <end position="416"/>
    </location>
</feature>
<feature type="topological domain" description="Cytoplasmic" evidence="1">
    <location>
        <begin position="417"/>
        <end position="719"/>
    </location>
</feature>
<feature type="domain" description="Ferric oxidoreductase">
    <location>
        <begin position="273"/>
        <end position="407"/>
    </location>
</feature>
<feature type="domain" description="FAD-binding FR-type" evidence="3">
    <location>
        <begin position="408"/>
        <end position="527"/>
    </location>
</feature>
<feature type="region of interest" description="Disordered" evidence="4">
    <location>
        <begin position="606"/>
        <end position="643"/>
    </location>
</feature>
<feature type="compositionally biased region" description="Polar residues" evidence="4">
    <location>
        <begin position="606"/>
        <end position="618"/>
    </location>
</feature>
<feature type="compositionally biased region" description="Polar residues" evidence="4">
    <location>
        <begin position="625"/>
        <end position="643"/>
    </location>
</feature>
<feature type="binding site" description="axial binding residue" evidence="1">
    <location>
        <position position="309"/>
    </location>
    <ligand>
        <name>heme</name>
        <dbReference type="ChEBI" id="CHEBI:30413"/>
        <label>1</label>
    </ligand>
    <ligandPart>
        <name>Fe</name>
        <dbReference type="ChEBI" id="CHEBI:18248"/>
    </ligandPart>
</feature>
<feature type="binding site" description="axial binding residue" evidence="1">
    <location>
        <position position="323"/>
    </location>
    <ligand>
        <name>heme</name>
        <dbReference type="ChEBI" id="CHEBI:30413"/>
        <label>2</label>
    </ligand>
    <ligandPart>
        <name>Fe</name>
        <dbReference type="ChEBI" id="CHEBI:18248"/>
    </ligandPart>
</feature>
<feature type="binding site" description="axial binding residue" evidence="1">
    <location>
        <position position="379"/>
    </location>
    <ligand>
        <name>heme</name>
        <dbReference type="ChEBI" id="CHEBI:30413"/>
        <label>1</label>
    </ligand>
    <ligandPart>
        <name>Fe</name>
        <dbReference type="ChEBI" id="CHEBI:18248"/>
    </ligandPart>
</feature>
<feature type="binding site" description="axial binding residue" evidence="1">
    <location>
        <position position="393"/>
    </location>
    <ligand>
        <name>heme</name>
        <dbReference type="ChEBI" id="CHEBI:30413"/>
        <label>2</label>
    </ligand>
    <ligandPart>
        <name>Fe</name>
        <dbReference type="ChEBI" id="CHEBI:18248"/>
    </ligandPart>
</feature>
<feature type="binding site" evidence="2">
    <location>
        <begin position="472"/>
        <end position="478"/>
    </location>
    <ligand>
        <name>FAD</name>
        <dbReference type="ChEBI" id="CHEBI:57692"/>
    </ligand>
</feature>
<feature type="binding site" evidence="2">
    <location>
        <begin position="519"/>
        <end position="522"/>
    </location>
    <ligand>
        <name>NADP(+)</name>
        <dbReference type="ChEBI" id="CHEBI:58349"/>
    </ligand>
</feature>
<feature type="binding site" evidence="2">
    <location>
        <begin position="685"/>
        <end position="686"/>
    </location>
    <ligand>
        <name>NADP(+)</name>
        <dbReference type="ChEBI" id="CHEBI:58349"/>
    </ligand>
</feature>
<feature type="glycosylation site" description="N-linked (GlcNAc...) asparagine" evidence="2">
    <location>
        <position position="51"/>
    </location>
</feature>
<feature type="glycosylation site" description="N-linked (GlcNAc...) asparagine" evidence="2">
    <location>
        <position position="80"/>
    </location>
</feature>
<feature type="glycosylation site" description="N-linked (GlcNAc...) asparagine" evidence="2">
    <location>
        <position position="101"/>
    </location>
</feature>
<feature type="glycosylation site" description="N-linked (GlcNAc...) asparagine" evidence="2">
    <location>
        <position position="113"/>
    </location>
</feature>
<feature type="glycosylation site" description="N-linked (GlcNAc...) asparagine" evidence="2">
    <location>
        <position position="127"/>
    </location>
</feature>
<feature type="glycosylation site" description="N-linked (GlcNAc...) asparagine" evidence="2">
    <location>
        <position position="135"/>
    </location>
</feature>
<reference key="1">
    <citation type="journal article" date="1997" name="Nature">
        <title>The nucleotide sequence of Saccharomyces cerevisiae chromosome XIV and its evolutionary implications.</title>
        <authorList>
            <person name="Philippsen P."/>
            <person name="Kleine K."/>
            <person name="Poehlmann R."/>
            <person name="Duesterhoeft A."/>
            <person name="Hamberg K."/>
            <person name="Hegemann J.H."/>
            <person name="Obermaier B."/>
            <person name="Urrestarazu L.A."/>
            <person name="Aert R."/>
            <person name="Albermann K."/>
            <person name="Altmann R."/>
            <person name="Andre B."/>
            <person name="Baladron V."/>
            <person name="Ballesta J.P.G."/>
            <person name="Becam A.-M."/>
            <person name="Beinhauer J.D."/>
            <person name="Boskovic J."/>
            <person name="Buitrago M.J."/>
            <person name="Bussereau F."/>
            <person name="Coster F."/>
            <person name="Crouzet M."/>
            <person name="D'Angelo M."/>
            <person name="Dal Pero F."/>
            <person name="De Antoni A."/>
            <person name="del Rey F."/>
            <person name="Doignon F."/>
            <person name="Domdey H."/>
            <person name="Dubois E."/>
            <person name="Fiedler T.A."/>
            <person name="Fleig U."/>
            <person name="Floeth M."/>
            <person name="Fritz C."/>
            <person name="Gaillardin C."/>
            <person name="Garcia-Cantalejo J.M."/>
            <person name="Glansdorff N."/>
            <person name="Goffeau A."/>
            <person name="Gueldener U."/>
            <person name="Herbert C.J."/>
            <person name="Heumann K."/>
            <person name="Heuss-Neitzel D."/>
            <person name="Hilbert H."/>
            <person name="Hinni K."/>
            <person name="Iraqui Houssaini I."/>
            <person name="Jacquet M."/>
            <person name="Jimenez A."/>
            <person name="Jonniaux J.-L."/>
            <person name="Karpfinger-Hartl L."/>
            <person name="Lanfranchi G."/>
            <person name="Lepingle A."/>
            <person name="Levesque H."/>
            <person name="Lyck R."/>
            <person name="Maftahi M."/>
            <person name="Mallet L."/>
            <person name="Maurer C.T.C."/>
            <person name="Messenguy F."/>
            <person name="Mewes H.-W."/>
            <person name="Moestl D."/>
            <person name="Nasr F."/>
            <person name="Nicaud J.-M."/>
            <person name="Niedenthal R.K."/>
            <person name="Pandolfo D."/>
            <person name="Pierard A."/>
            <person name="Piravandi E."/>
            <person name="Planta R.J."/>
            <person name="Pohl T.M."/>
            <person name="Purnelle B."/>
            <person name="Rebischung C."/>
            <person name="Remacha M.A."/>
            <person name="Revuelta J.L."/>
            <person name="Rinke M."/>
            <person name="Saiz J.E."/>
            <person name="Sartorello F."/>
            <person name="Scherens B."/>
            <person name="Sen-Gupta M."/>
            <person name="Soler-Mira A."/>
            <person name="Urbanus J.H.M."/>
            <person name="Valle G."/>
            <person name="Van Dyck L."/>
            <person name="Verhasselt P."/>
            <person name="Vierendeels F."/>
            <person name="Vissers S."/>
            <person name="Voet M."/>
            <person name="Volckaert G."/>
            <person name="Wach A."/>
            <person name="Wambutt R."/>
            <person name="Wedler H."/>
            <person name="Zollner A."/>
            <person name="Hani J."/>
        </authorList>
    </citation>
    <scope>NUCLEOTIDE SEQUENCE [LARGE SCALE GENOMIC DNA]</scope>
    <source>
        <strain>ATCC 204508 / S288c</strain>
    </source>
</reference>
<reference key="2">
    <citation type="journal article" date="2014" name="G3 (Bethesda)">
        <title>The reference genome sequence of Saccharomyces cerevisiae: Then and now.</title>
        <authorList>
            <person name="Engel S.R."/>
            <person name="Dietrich F.S."/>
            <person name="Fisk D.G."/>
            <person name="Binkley G."/>
            <person name="Balakrishnan R."/>
            <person name="Costanzo M.C."/>
            <person name="Dwight S.S."/>
            <person name="Hitz B.C."/>
            <person name="Karra K."/>
            <person name="Nash R.S."/>
            <person name="Weng S."/>
            <person name="Wong E.D."/>
            <person name="Lloyd P."/>
            <person name="Skrzypek M.S."/>
            <person name="Miyasato S.R."/>
            <person name="Simison M."/>
            <person name="Cherry J.M."/>
        </authorList>
    </citation>
    <scope>GENOME REANNOTATION</scope>
    <source>
        <strain>ATCC 204508 / S288c</strain>
    </source>
</reference>
<reference key="3">
    <citation type="journal article" date="1998" name="J. Biol. Chem.">
        <title>Metalloregulation of FRE1 and FRE2 homologs in Saccharomyces cerevisiae.</title>
        <authorList>
            <person name="Martins L.J."/>
            <person name="Jensen L.T."/>
            <person name="Simon J.R."/>
            <person name="Keller G.L."/>
            <person name="Winge D.R."/>
        </authorList>
    </citation>
    <scope>INDUCTION</scope>
</reference>
<reference key="4">
    <citation type="journal article" date="1998" name="J. Biol. Chem.">
        <authorList>
            <person name="Martins L.J."/>
            <person name="Jensen L.T."/>
            <person name="Simon J.R."/>
            <person name="Keller G.L."/>
            <person name="Winge D.R."/>
        </authorList>
    </citation>
    <scope>ERRATUM OF PUBMED:9726978</scope>
</reference>
<reference key="5">
    <citation type="journal article" date="1999" name="Yeast">
        <title>Regulated expression of the Saccharomyces cerevisiae Fre1p/Fre2p Fe/Cu reductase related genes.</title>
        <authorList>
            <person name="Georgatsou E."/>
            <person name="Alexandraki D."/>
        </authorList>
    </citation>
    <scope>INDUCTION</scope>
</reference>
<reference key="6">
    <citation type="journal article" date="2001" name="J. Biol. Chem.">
        <title>The role of the FRE family of plasma membrane reductases in the uptake of siderophore-iron in Saccharomyces cerevisiae.</title>
        <authorList>
            <person name="Yun C.-W."/>
            <person name="Bauler M."/>
            <person name="Moore R.E."/>
            <person name="Klebba P.E."/>
            <person name="Philpott C.C."/>
        </authorList>
    </citation>
    <scope>FUNCTION</scope>
</reference>
<organism>
    <name type="scientific">Saccharomyces cerevisiae (strain ATCC 204508 / S288c)</name>
    <name type="common">Baker's yeast</name>
    <dbReference type="NCBI Taxonomy" id="559292"/>
    <lineage>
        <taxon>Eukaryota</taxon>
        <taxon>Fungi</taxon>
        <taxon>Dikarya</taxon>
        <taxon>Ascomycota</taxon>
        <taxon>Saccharomycotina</taxon>
        <taxon>Saccharomycetes</taxon>
        <taxon>Saccharomycetales</taxon>
        <taxon>Saccharomycetaceae</taxon>
        <taxon>Saccharomyces</taxon>
    </lineage>
</organism>
<accession>P53746</accession>
<accession>D6W1N5</accession>
<keyword id="KW-1003">Cell membrane</keyword>
<keyword id="KW-0249">Electron transport</keyword>
<keyword id="KW-0274">FAD</keyword>
<keyword id="KW-0285">Flavoprotein</keyword>
<keyword id="KW-0325">Glycoprotein</keyword>
<keyword id="KW-0349">Heme</keyword>
<keyword id="KW-0406">Ion transport</keyword>
<keyword id="KW-0408">Iron</keyword>
<keyword id="KW-0410">Iron transport</keyword>
<keyword id="KW-0472">Membrane</keyword>
<keyword id="KW-0479">Metal-binding</keyword>
<keyword id="KW-0521">NADP</keyword>
<keyword id="KW-0560">Oxidoreductase</keyword>
<keyword id="KW-1185">Reference proteome</keyword>
<keyword id="KW-0732">Signal</keyword>
<keyword id="KW-0812">Transmembrane</keyword>
<keyword id="KW-1133">Transmembrane helix</keyword>
<keyword id="KW-0813">Transport</keyword>
<proteinExistence type="evidence at transcript level"/>
<comment type="function">
    <text evidence="6">Siderophore-iron reductase responsible for reducing extracellular iron prior to import. Catalyzes the reductive uptake of Fe(3+) bound to dihydroxamate rhodotorulic acid. Fe(3+) is reduced to Fe(2+), which then dissociates from the siderophore and can be imported by the high-affinity Fe(2+) transport complex in the plasma membrane.</text>
</comment>
<comment type="catalytic activity">
    <reaction>
        <text>2 a Fe(II)-siderophore + NADP(+) + H(+) = 2 a Fe(III)-siderophore + NADPH</text>
        <dbReference type="Rhea" id="RHEA:28795"/>
        <dbReference type="Rhea" id="RHEA-COMP:11342"/>
        <dbReference type="Rhea" id="RHEA-COMP:11344"/>
        <dbReference type="ChEBI" id="CHEBI:15378"/>
        <dbReference type="ChEBI" id="CHEBI:29033"/>
        <dbReference type="ChEBI" id="CHEBI:29034"/>
        <dbReference type="ChEBI" id="CHEBI:57783"/>
        <dbReference type="ChEBI" id="CHEBI:58349"/>
        <dbReference type="EC" id="1.16.1.9"/>
    </reaction>
</comment>
<comment type="cofactor">
    <cofactor evidence="8">
        <name>FAD</name>
        <dbReference type="ChEBI" id="CHEBI:57692"/>
    </cofactor>
</comment>
<comment type="subcellular location">
    <subcellularLocation>
        <location evidence="8">Cell membrane</location>
        <topology evidence="8">Multi-pass membrane protein</topology>
    </subcellularLocation>
</comment>
<comment type="induction">
    <text evidence="5 7">By iron deprivation.</text>
</comment>
<comment type="similarity">
    <text evidence="8">Belongs to the ferric reductase (FRE) family.</text>
</comment>
<dbReference type="EC" id="1.16.1.9"/>
<dbReference type="EMBL" id="Z71675">
    <property type="protein sequence ID" value="CAA96342.1"/>
    <property type="molecule type" value="Genomic_DNA"/>
</dbReference>
<dbReference type="EMBL" id="BK006947">
    <property type="protein sequence ID" value="DAA10601.1"/>
    <property type="molecule type" value="Genomic_DNA"/>
</dbReference>
<dbReference type="PIR" id="S63392">
    <property type="entry name" value="S63392"/>
</dbReference>
<dbReference type="RefSeq" id="NP_014458.1">
    <property type="nucleotide sequence ID" value="NM_001183237.1"/>
</dbReference>
<dbReference type="SMR" id="P53746"/>
<dbReference type="BioGRID" id="35886">
    <property type="interactions" value="34"/>
</dbReference>
<dbReference type="DIP" id="DIP-7626N"/>
<dbReference type="FunCoup" id="P53746">
    <property type="interactions" value="455"/>
</dbReference>
<dbReference type="IntAct" id="P53746">
    <property type="interactions" value="7"/>
</dbReference>
<dbReference type="MINT" id="P53746"/>
<dbReference type="STRING" id="4932.YNR060W"/>
<dbReference type="GlyCosmos" id="P53746">
    <property type="glycosylation" value="6 sites, No reported glycans"/>
</dbReference>
<dbReference type="GlyGen" id="P53746">
    <property type="glycosylation" value="6 sites"/>
</dbReference>
<dbReference type="iPTMnet" id="P53746"/>
<dbReference type="PaxDb" id="4932-YNR060W"/>
<dbReference type="PeptideAtlas" id="P53746"/>
<dbReference type="EnsemblFungi" id="YNR060W_mRNA">
    <property type="protein sequence ID" value="YNR060W"/>
    <property type="gene ID" value="YNR060W"/>
</dbReference>
<dbReference type="GeneID" id="855797"/>
<dbReference type="KEGG" id="sce:YNR060W"/>
<dbReference type="AGR" id="SGD:S000005343"/>
<dbReference type="SGD" id="S000005343">
    <property type="gene designation" value="FRE4"/>
</dbReference>
<dbReference type="VEuPathDB" id="FungiDB:YNR060W"/>
<dbReference type="eggNOG" id="KOG0039">
    <property type="taxonomic scope" value="Eukaryota"/>
</dbReference>
<dbReference type="GeneTree" id="ENSGT00940000176303"/>
<dbReference type="HOGENOM" id="CLU_010365_4_0_1"/>
<dbReference type="InParanoid" id="P53746"/>
<dbReference type="OMA" id="YDGWTRH"/>
<dbReference type="OrthoDB" id="4494341at2759"/>
<dbReference type="BioCyc" id="YEAST:G3O-33364-MONOMER"/>
<dbReference type="BioGRID-ORCS" id="855797">
    <property type="hits" value="1 hit in 10 CRISPR screens"/>
</dbReference>
<dbReference type="PRO" id="PR:P53746"/>
<dbReference type="Proteomes" id="UP000002311">
    <property type="component" value="Chromosome XIV"/>
</dbReference>
<dbReference type="RNAct" id="P53746">
    <property type="molecule type" value="protein"/>
</dbReference>
<dbReference type="GO" id="GO:0005886">
    <property type="term" value="C:plasma membrane"/>
    <property type="evidence" value="ECO:0000315"/>
    <property type="project" value="SGD"/>
</dbReference>
<dbReference type="GO" id="GO:0052851">
    <property type="term" value="F:ferric-chelate reductase (NADPH) activity"/>
    <property type="evidence" value="ECO:0007669"/>
    <property type="project" value="UniProtKB-EC"/>
</dbReference>
<dbReference type="GO" id="GO:0000293">
    <property type="term" value="F:ferric-chelate reductase activity"/>
    <property type="evidence" value="ECO:0000316"/>
    <property type="project" value="SGD"/>
</dbReference>
<dbReference type="GO" id="GO:0046872">
    <property type="term" value="F:metal ion binding"/>
    <property type="evidence" value="ECO:0007669"/>
    <property type="project" value="UniProtKB-KW"/>
</dbReference>
<dbReference type="GO" id="GO:0015677">
    <property type="term" value="P:copper ion import"/>
    <property type="evidence" value="ECO:0000318"/>
    <property type="project" value="GO_Central"/>
</dbReference>
<dbReference type="GO" id="GO:0006879">
    <property type="term" value="P:intracellular iron ion homeostasis"/>
    <property type="evidence" value="ECO:0000318"/>
    <property type="project" value="GO_Central"/>
</dbReference>
<dbReference type="GO" id="GO:0006826">
    <property type="term" value="P:iron ion transport"/>
    <property type="evidence" value="ECO:0000318"/>
    <property type="project" value="GO_Central"/>
</dbReference>
<dbReference type="GO" id="GO:0015891">
    <property type="term" value="P:siderophore transport"/>
    <property type="evidence" value="ECO:0000315"/>
    <property type="project" value="SGD"/>
</dbReference>
<dbReference type="CDD" id="cd06186">
    <property type="entry name" value="NOX_Duox_like_FAD_NADP"/>
    <property type="match status" value="1"/>
</dbReference>
<dbReference type="FunFam" id="3.40.50.80:FF:000035">
    <property type="entry name" value="FRE4p Ferric reductase"/>
    <property type="match status" value="1"/>
</dbReference>
<dbReference type="Gene3D" id="3.40.50.80">
    <property type="entry name" value="Nucleotide-binding domain of ferredoxin-NADP reductase (FNR) module"/>
    <property type="match status" value="1"/>
</dbReference>
<dbReference type="InterPro" id="IPR013112">
    <property type="entry name" value="FAD-bd_8"/>
</dbReference>
<dbReference type="InterPro" id="IPR017927">
    <property type="entry name" value="FAD-bd_FR_type"/>
</dbReference>
<dbReference type="InterPro" id="IPR013130">
    <property type="entry name" value="Fe3_Rdtase_TM_dom"/>
</dbReference>
<dbReference type="InterPro" id="IPR013121">
    <property type="entry name" value="Fe_red_NAD-bd_6"/>
</dbReference>
<dbReference type="InterPro" id="IPR051410">
    <property type="entry name" value="Ferric/Cupric_Reductase"/>
</dbReference>
<dbReference type="InterPro" id="IPR039261">
    <property type="entry name" value="FNR_nucleotide-bd"/>
</dbReference>
<dbReference type="InterPro" id="IPR017938">
    <property type="entry name" value="Riboflavin_synthase-like_b-brl"/>
</dbReference>
<dbReference type="PANTHER" id="PTHR32361:SF9">
    <property type="entry name" value="FERRIC REDUCTASE TRANSMEMBRANE COMPONENT 3-RELATED"/>
    <property type="match status" value="1"/>
</dbReference>
<dbReference type="PANTHER" id="PTHR32361">
    <property type="entry name" value="FERRIC/CUPRIC REDUCTASE TRANSMEMBRANE COMPONENT"/>
    <property type="match status" value="1"/>
</dbReference>
<dbReference type="Pfam" id="PF08022">
    <property type="entry name" value="FAD_binding_8"/>
    <property type="match status" value="1"/>
</dbReference>
<dbReference type="Pfam" id="PF01794">
    <property type="entry name" value="Ferric_reduct"/>
    <property type="match status" value="1"/>
</dbReference>
<dbReference type="Pfam" id="PF08030">
    <property type="entry name" value="NAD_binding_6"/>
    <property type="match status" value="1"/>
</dbReference>
<dbReference type="SFLD" id="SFLDS00052">
    <property type="entry name" value="Ferric_Reductase_Domain"/>
    <property type="match status" value="1"/>
</dbReference>
<dbReference type="SFLD" id="SFLDG01168">
    <property type="entry name" value="Ferric_reductase_subgroup_(FRE"/>
    <property type="match status" value="1"/>
</dbReference>
<dbReference type="SUPFAM" id="SSF52343">
    <property type="entry name" value="Ferredoxin reductase-like, C-terminal NADP-linked domain"/>
    <property type="match status" value="1"/>
</dbReference>
<dbReference type="SUPFAM" id="SSF63380">
    <property type="entry name" value="Riboflavin synthase domain-like"/>
    <property type="match status" value="1"/>
</dbReference>
<dbReference type="PROSITE" id="PS51384">
    <property type="entry name" value="FAD_FR"/>
    <property type="match status" value="1"/>
</dbReference>
<gene>
    <name type="primary">FRE4</name>
    <name type="ordered locus">YNR060W</name>
    <name type="ORF">N3518</name>
</gene>
<protein>
    <recommendedName>
        <fullName>Ferric reductase transmembrane component 4</fullName>
        <ecNumber>1.16.1.9</ecNumber>
    </recommendedName>
    <alternativeName>
        <fullName>Ferric-chelate reductase 4</fullName>
    </alternativeName>
</protein>